<proteinExistence type="inferred from homology"/>
<comment type="function">
    <text evidence="1">Binds directly to 23S rRNA. The L1 stalk is quite mobile in the ribosome, and is involved in E site tRNA release.</text>
</comment>
<comment type="function">
    <text evidence="1">Protein L1 is also a translational repressor protein, it controls the translation of the L11 operon by binding to its mRNA.</text>
</comment>
<comment type="subunit">
    <text evidence="1">Part of the 50S ribosomal subunit.</text>
</comment>
<comment type="similarity">
    <text evidence="1">Belongs to the universal ribosomal protein uL1 family.</text>
</comment>
<reference key="1">
    <citation type="submission" date="2007-10" db="EMBL/GenBank/DDBJ databases">
        <title>Genome sequence of Campylobacter concisus 13826 isolated from human feces.</title>
        <authorList>
            <person name="Fouts D.E."/>
            <person name="Mongodin E.F."/>
            <person name="Puiu D."/>
            <person name="Sebastian Y."/>
            <person name="Miller W.G."/>
            <person name="Mandrell R.E."/>
            <person name="On S."/>
            <person name="Nelson K.E."/>
        </authorList>
    </citation>
    <scope>NUCLEOTIDE SEQUENCE [LARGE SCALE GENOMIC DNA]</scope>
    <source>
        <strain>13826</strain>
    </source>
</reference>
<evidence type="ECO:0000255" key="1">
    <source>
        <dbReference type="HAMAP-Rule" id="MF_01318"/>
    </source>
</evidence>
<evidence type="ECO:0000305" key="2"/>
<name>RL1_CAMC1</name>
<accession>A7ZCN4</accession>
<protein>
    <recommendedName>
        <fullName evidence="1">Large ribosomal subunit protein uL1</fullName>
    </recommendedName>
    <alternativeName>
        <fullName evidence="2">50S ribosomal protein L1</fullName>
    </alternativeName>
</protein>
<feature type="chain" id="PRO_1000051901" description="Large ribosomal subunit protein uL1">
    <location>
        <begin position="1"/>
        <end position="233"/>
    </location>
</feature>
<dbReference type="EMBL" id="CP000792">
    <property type="protein sequence ID" value="EAT97370.1"/>
    <property type="molecule type" value="Genomic_DNA"/>
</dbReference>
<dbReference type="RefSeq" id="WP_002941167.1">
    <property type="nucleotide sequence ID" value="NC_009802.2"/>
</dbReference>
<dbReference type="SMR" id="A7ZCN4"/>
<dbReference type="STRING" id="360104.CCC13826_0171"/>
<dbReference type="KEGG" id="cco:CCC13826_0171"/>
<dbReference type="eggNOG" id="COG0081">
    <property type="taxonomic scope" value="Bacteria"/>
</dbReference>
<dbReference type="HOGENOM" id="CLU_062853_0_0_7"/>
<dbReference type="OrthoDB" id="9803740at2"/>
<dbReference type="Proteomes" id="UP000001121">
    <property type="component" value="Chromosome"/>
</dbReference>
<dbReference type="GO" id="GO:0022625">
    <property type="term" value="C:cytosolic large ribosomal subunit"/>
    <property type="evidence" value="ECO:0007669"/>
    <property type="project" value="TreeGrafter"/>
</dbReference>
<dbReference type="GO" id="GO:0019843">
    <property type="term" value="F:rRNA binding"/>
    <property type="evidence" value="ECO:0007669"/>
    <property type="project" value="UniProtKB-UniRule"/>
</dbReference>
<dbReference type="GO" id="GO:0003735">
    <property type="term" value="F:structural constituent of ribosome"/>
    <property type="evidence" value="ECO:0007669"/>
    <property type="project" value="InterPro"/>
</dbReference>
<dbReference type="GO" id="GO:0000049">
    <property type="term" value="F:tRNA binding"/>
    <property type="evidence" value="ECO:0007669"/>
    <property type="project" value="UniProtKB-KW"/>
</dbReference>
<dbReference type="GO" id="GO:0006417">
    <property type="term" value="P:regulation of translation"/>
    <property type="evidence" value="ECO:0007669"/>
    <property type="project" value="UniProtKB-KW"/>
</dbReference>
<dbReference type="GO" id="GO:0006412">
    <property type="term" value="P:translation"/>
    <property type="evidence" value="ECO:0007669"/>
    <property type="project" value="UniProtKB-UniRule"/>
</dbReference>
<dbReference type="CDD" id="cd00403">
    <property type="entry name" value="Ribosomal_L1"/>
    <property type="match status" value="1"/>
</dbReference>
<dbReference type="FunFam" id="3.40.50.790:FF:000001">
    <property type="entry name" value="50S ribosomal protein L1"/>
    <property type="match status" value="1"/>
</dbReference>
<dbReference type="Gene3D" id="3.30.190.20">
    <property type="match status" value="1"/>
</dbReference>
<dbReference type="Gene3D" id="3.40.50.790">
    <property type="match status" value="1"/>
</dbReference>
<dbReference type="HAMAP" id="MF_01318_B">
    <property type="entry name" value="Ribosomal_uL1_B"/>
    <property type="match status" value="1"/>
</dbReference>
<dbReference type="InterPro" id="IPR005878">
    <property type="entry name" value="Ribosom_uL1_bac-type"/>
</dbReference>
<dbReference type="InterPro" id="IPR002143">
    <property type="entry name" value="Ribosomal_uL1"/>
</dbReference>
<dbReference type="InterPro" id="IPR023674">
    <property type="entry name" value="Ribosomal_uL1-like"/>
</dbReference>
<dbReference type="InterPro" id="IPR028364">
    <property type="entry name" value="Ribosomal_uL1/biogenesis"/>
</dbReference>
<dbReference type="InterPro" id="IPR016095">
    <property type="entry name" value="Ribosomal_uL1_3-a/b-sand"/>
</dbReference>
<dbReference type="InterPro" id="IPR023673">
    <property type="entry name" value="Ribosomal_uL1_CS"/>
</dbReference>
<dbReference type="NCBIfam" id="TIGR01169">
    <property type="entry name" value="rplA_bact"/>
    <property type="match status" value="1"/>
</dbReference>
<dbReference type="PANTHER" id="PTHR36427">
    <property type="entry name" value="54S RIBOSOMAL PROTEIN L1, MITOCHONDRIAL"/>
    <property type="match status" value="1"/>
</dbReference>
<dbReference type="PANTHER" id="PTHR36427:SF3">
    <property type="entry name" value="LARGE RIBOSOMAL SUBUNIT PROTEIN UL1M"/>
    <property type="match status" value="1"/>
</dbReference>
<dbReference type="Pfam" id="PF00687">
    <property type="entry name" value="Ribosomal_L1"/>
    <property type="match status" value="1"/>
</dbReference>
<dbReference type="PIRSF" id="PIRSF002155">
    <property type="entry name" value="Ribosomal_L1"/>
    <property type="match status" value="1"/>
</dbReference>
<dbReference type="SUPFAM" id="SSF56808">
    <property type="entry name" value="Ribosomal protein L1"/>
    <property type="match status" value="1"/>
</dbReference>
<dbReference type="PROSITE" id="PS01199">
    <property type="entry name" value="RIBOSOMAL_L1"/>
    <property type="match status" value="1"/>
</dbReference>
<keyword id="KW-0678">Repressor</keyword>
<keyword id="KW-0687">Ribonucleoprotein</keyword>
<keyword id="KW-0689">Ribosomal protein</keyword>
<keyword id="KW-0694">RNA-binding</keyword>
<keyword id="KW-0699">rRNA-binding</keyword>
<keyword id="KW-0810">Translation regulation</keyword>
<keyword id="KW-0820">tRNA-binding</keyword>
<organism>
    <name type="scientific">Campylobacter concisus (strain 13826)</name>
    <dbReference type="NCBI Taxonomy" id="360104"/>
    <lineage>
        <taxon>Bacteria</taxon>
        <taxon>Pseudomonadati</taxon>
        <taxon>Campylobacterota</taxon>
        <taxon>Epsilonproteobacteria</taxon>
        <taxon>Campylobacterales</taxon>
        <taxon>Campylobacteraceae</taxon>
        <taxon>Campylobacter</taxon>
    </lineage>
</organism>
<sequence length="233" mass="24993">MGKTSKRFQELLKKVEQDKIYNLSEAIDTVKTLASAKFNETVEIALKLNVDPRHADQMVRGSVVLPAGTGKVVRVAVIAKDAKADEAKAAGADIVGADDLVEDIQKGIMNFDVLIATPNLMGLVGKVGRILGPKGLMPNPKTGTVTMDVAQAVNNAKSGQVNFRVDKQGNIHAGLGKVNFTKEQLNENISTFIKAINKHKPATAKGRYVKNASLSLTMSPSVTLDTQEVMDLK</sequence>
<gene>
    <name evidence="1" type="primary">rplA</name>
    <name type="ordered locus">Ccon26_06600</name>
    <name type="ORF">CCC13826_0171</name>
</gene>